<protein>
    <recommendedName>
        <fullName evidence="1">Imidazole glycerol phosphate synthase subunit HisF</fullName>
        <ecNumber evidence="1">4.3.2.10</ecNumber>
    </recommendedName>
    <alternativeName>
        <fullName evidence="1">IGP synthase cyclase subunit</fullName>
    </alternativeName>
    <alternativeName>
        <fullName evidence="1">IGP synthase subunit HisF</fullName>
    </alternativeName>
    <alternativeName>
        <fullName evidence="1">ImGP synthase subunit HisF</fullName>
        <shortName evidence="1">IGPS subunit HisF</shortName>
    </alternativeName>
</protein>
<keyword id="KW-0028">Amino-acid biosynthesis</keyword>
<keyword id="KW-0963">Cytoplasm</keyword>
<keyword id="KW-0368">Histidine biosynthesis</keyword>
<keyword id="KW-0456">Lyase</keyword>
<keyword id="KW-1185">Reference proteome</keyword>
<gene>
    <name evidence="1" type="primary">hisF</name>
    <name type="ordered locus">PERMA_0864</name>
</gene>
<proteinExistence type="inferred from homology"/>
<evidence type="ECO:0000255" key="1">
    <source>
        <dbReference type="HAMAP-Rule" id="MF_01013"/>
    </source>
</evidence>
<reference key="1">
    <citation type="journal article" date="2009" name="J. Bacteriol.">
        <title>Complete and draft genome sequences of six members of the Aquificales.</title>
        <authorList>
            <person name="Reysenbach A.-L."/>
            <person name="Hamamura N."/>
            <person name="Podar M."/>
            <person name="Griffiths E."/>
            <person name="Ferreira S."/>
            <person name="Hochstein R."/>
            <person name="Heidelberg J."/>
            <person name="Johnson J."/>
            <person name="Mead D."/>
            <person name="Pohorille A."/>
            <person name="Sarmiento M."/>
            <person name="Schweighofer K."/>
            <person name="Seshadri R."/>
            <person name="Voytek M.A."/>
        </authorList>
    </citation>
    <scope>NUCLEOTIDE SEQUENCE [LARGE SCALE GENOMIC DNA]</scope>
    <source>
        <strain>DSM 14350 / EX-H1</strain>
    </source>
</reference>
<feature type="chain" id="PRO_1000148934" description="Imidazole glycerol phosphate synthase subunit HisF">
    <location>
        <begin position="1"/>
        <end position="252"/>
    </location>
</feature>
<feature type="active site" evidence="1">
    <location>
        <position position="11"/>
    </location>
</feature>
<feature type="active site" evidence="1">
    <location>
        <position position="130"/>
    </location>
</feature>
<name>HIS6_PERMH</name>
<accession>C0QPQ6</accession>
<organism>
    <name type="scientific">Persephonella marina (strain DSM 14350 / EX-H1)</name>
    <dbReference type="NCBI Taxonomy" id="123214"/>
    <lineage>
        <taxon>Bacteria</taxon>
        <taxon>Pseudomonadati</taxon>
        <taxon>Aquificota</taxon>
        <taxon>Aquificia</taxon>
        <taxon>Aquificales</taxon>
        <taxon>Hydrogenothermaceae</taxon>
        <taxon>Persephonella</taxon>
    </lineage>
</organism>
<comment type="function">
    <text evidence="1">IGPS catalyzes the conversion of PRFAR and glutamine to IGP, AICAR and glutamate. The HisF subunit catalyzes the cyclization activity that produces IGP and AICAR from PRFAR using the ammonia provided by the HisH subunit.</text>
</comment>
<comment type="catalytic activity">
    <reaction evidence="1">
        <text>5-[(5-phospho-1-deoxy-D-ribulos-1-ylimino)methylamino]-1-(5-phospho-beta-D-ribosyl)imidazole-4-carboxamide + L-glutamine = D-erythro-1-(imidazol-4-yl)glycerol 3-phosphate + 5-amino-1-(5-phospho-beta-D-ribosyl)imidazole-4-carboxamide + L-glutamate + H(+)</text>
        <dbReference type="Rhea" id="RHEA:24793"/>
        <dbReference type="ChEBI" id="CHEBI:15378"/>
        <dbReference type="ChEBI" id="CHEBI:29985"/>
        <dbReference type="ChEBI" id="CHEBI:58278"/>
        <dbReference type="ChEBI" id="CHEBI:58359"/>
        <dbReference type="ChEBI" id="CHEBI:58475"/>
        <dbReference type="ChEBI" id="CHEBI:58525"/>
        <dbReference type="EC" id="4.3.2.10"/>
    </reaction>
</comment>
<comment type="pathway">
    <text evidence="1">Amino-acid biosynthesis; L-histidine biosynthesis; L-histidine from 5-phospho-alpha-D-ribose 1-diphosphate: step 5/9.</text>
</comment>
<comment type="subunit">
    <text evidence="1">Heterodimer of HisH and HisF.</text>
</comment>
<comment type="subcellular location">
    <subcellularLocation>
        <location evidence="1">Cytoplasm</location>
    </subcellularLocation>
</comment>
<comment type="similarity">
    <text evidence="1">Belongs to the HisA/HisF family.</text>
</comment>
<dbReference type="EC" id="4.3.2.10" evidence="1"/>
<dbReference type="EMBL" id="CP001230">
    <property type="protein sequence ID" value="ACO04078.1"/>
    <property type="molecule type" value="Genomic_DNA"/>
</dbReference>
<dbReference type="RefSeq" id="WP_012676316.1">
    <property type="nucleotide sequence ID" value="NC_012440.1"/>
</dbReference>
<dbReference type="SMR" id="C0QPQ6"/>
<dbReference type="STRING" id="123214.PERMA_0864"/>
<dbReference type="PaxDb" id="123214-PERMA_0864"/>
<dbReference type="KEGG" id="pmx:PERMA_0864"/>
<dbReference type="eggNOG" id="COG0107">
    <property type="taxonomic scope" value="Bacteria"/>
</dbReference>
<dbReference type="HOGENOM" id="CLU_048577_4_0_0"/>
<dbReference type="OrthoDB" id="9781903at2"/>
<dbReference type="UniPathway" id="UPA00031">
    <property type="reaction ID" value="UER00010"/>
</dbReference>
<dbReference type="Proteomes" id="UP000001366">
    <property type="component" value="Chromosome"/>
</dbReference>
<dbReference type="GO" id="GO:0005737">
    <property type="term" value="C:cytoplasm"/>
    <property type="evidence" value="ECO:0007669"/>
    <property type="project" value="UniProtKB-SubCell"/>
</dbReference>
<dbReference type="GO" id="GO:0000107">
    <property type="term" value="F:imidazoleglycerol-phosphate synthase activity"/>
    <property type="evidence" value="ECO:0007669"/>
    <property type="project" value="UniProtKB-UniRule"/>
</dbReference>
<dbReference type="GO" id="GO:0016829">
    <property type="term" value="F:lyase activity"/>
    <property type="evidence" value="ECO:0007669"/>
    <property type="project" value="UniProtKB-KW"/>
</dbReference>
<dbReference type="GO" id="GO:0000105">
    <property type="term" value="P:L-histidine biosynthetic process"/>
    <property type="evidence" value="ECO:0007669"/>
    <property type="project" value="UniProtKB-UniRule"/>
</dbReference>
<dbReference type="CDD" id="cd04731">
    <property type="entry name" value="HisF"/>
    <property type="match status" value="1"/>
</dbReference>
<dbReference type="FunFam" id="3.20.20.70:FF:000006">
    <property type="entry name" value="Imidazole glycerol phosphate synthase subunit HisF"/>
    <property type="match status" value="1"/>
</dbReference>
<dbReference type="Gene3D" id="3.20.20.70">
    <property type="entry name" value="Aldolase class I"/>
    <property type="match status" value="1"/>
</dbReference>
<dbReference type="HAMAP" id="MF_01013">
    <property type="entry name" value="HisF"/>
    <property type="match status" value="1"/>
</dbReference>
<dbReference type="InterPro" id="IPR013785">
    <property type="entry name" value="Aldolase_TIM"/>
</dbReference>
<dbReference type="InterPro" id="IPR006062">
    <property type="entry name" value="His_biosynth"/>
</dbReference>
<dbReference type="InterPro" id="IPR004651">
    <property type="entry name" value="HisF"/>
</dbReference>
<dbReference type="InterPro" id="IPR050064">
    <property type="entry name" value="IGPS_HisA/HisF"/>
</dbReference>
<dbReference type="InterPro" id="IPR011060">
    <property type="entry name" value="RibuloseP-bd_barrel"/>
</dbReference>
<dbReference type="NCBIfam" id="TIGR00735">
    <property type="entry name" value="hisF"/>
    <property type="match status" value="1"/>
</dbReference>
<dbReference type="PANTHER" id="PTHR21235:SF2">
    <property type="entry name" value="IMIDAZOLE GLYCEROL PHOSPHATE SYNTHASE HISHF"/>
    <property type="match status" value="1"/>
</dbReference>
<dbReference type="PANTHER" id="PTHR21235">
    <property type="entry name" value="IMIDAZOLE GLYCEROL PHOSPHATE SYNTHASE SUBUNIT HISF/H IGP SYNTHASE SUBUNIT HISF/H"/>
    <property type="match status" value="1"/>
</dbReference>
<dbReference type="Pfam" id="PF00977">
    <property type="entry name" value="His_biosynth"/>
    <property type="match status" value="1"/>
</dbReference>
<dbReference type="SUPFAM" id="SSF51366">
    <property type="entry name" value="Ribulose-phoshate binding barrel"/>
    <property type="match status" value="1"/>
</dbReference>
<sequence length="252" mass="26788">MLAKRIIPCLDVNKGRVVKGVNFVNLVDAGDPVEAAKAYDEAGADELVFLDITASAEERDIILDVVKQTAETVFMPLTVGGGVRSLEDVRKLLESGADKVSINTAAVKNPSLVESAAVRFGSSTIVVAIDAKRTGKDRWEVYINGGRTATGIDAVEWAKAVEDLGAGEILLTSMDRDGTKNGYDIALTRAISEAVSIPVIASGGAGKKEDFYDAFTEGKADAALAASLFHFKELTIGELKEFLKEKGIPVRL</sequence>